<accession>Q9BH79</accession>
<accession>Q9BP52</accession>
<proteinExistence type="inferred from homology"/>
<organism>
    <name type="scientific">Conus arenatus</name>
    <name type="common">Sand-dusted cone</name>
    <dbReference type="NCBI Taxonomy" id="89451"/>
    <lineage>
        <taxon>Eukaryota</taxon>
        <taxon>Metazoa</taxon>
        <taxon>Spiralia</taxon>
        <taxon>Lophotrochozoa</taxon>
        <taxon>Mollusca</taxon>
        <taxon>Gastropoda</taxon>
        <taxon>Caenogastropoda</taxon>
        <taxon>Neogastropoda</taxon>
        <taxon>Conoidea</taxon>
        <taxon>Conidae</taxon>
        <taxon>Conus</taxon>
    </lineage>
</organism>
<keyword id="KW-1015">Disulfide bond</keyword>
<keyword id="KW-0528">Neurotoxin</keyword>
<keyword id="KW-0964">Secreted</keyword>
<keyword id="KW-0732">Signal</keyword>
<keyword id="KW-0800">Toxin</keyword>
<name>CT53_CONAE</name>
<reference key="1">
    <citation type="journal article" date="2001" name="Mol. Biol. Evol.">
        <title>Mechanisms for evolving hypervariability: the case of conopeptides.</title>
        <authorList>
            <person name="Conticello S.G."/>
            <person name="Gilad Y."/>
            <person name="Avidan N."/>
            <person name="Ben-Asher E."/>
            <person name="Levy Z."/>
            <person name="Fainzilber M."/>
        </authorList>
    </citation>
    <scope>NUCLEOTIDE SEQUENCE [MRNA]</scope>
    <source>
        <tissue>Venom duct</tissue>
    </source>
</reference>
<feature type="signal peptide" evidence="2">
    <location>
        <begin position="1"/>
        <end position="19"/>
    </location>
</feature>
<feature type="propeptide" id="PRO_0000404950" evidence="1">
    <location>
        <begin position="20"/>
        <end position="53"/>
    </location>
</feature>
<feature type="peptide" id="PRO_0000404951" description="Conotoxin Ar5.3">
    <location>
        <begin position="54"/>
        <end position="66"/>
    </location>
</feature>
<evidence type="ECO:0000250" key="1"/>
<evidence type="ECO:0000255" key="2"/>
<evidence type="ECO:0000305" key="3"/>
<evidence type="ECO:0000305" key="4">
    <source>
    </source>
</evidence>
<evidence type="ECO:0000312" key="5">
    <source>
        <dbReference type="EMBL" id="AAG60420.1"/>
    </source>
</evidence>
<evidence type="ECO:0000312" key="6">
    <source>
        <dbReference type="EMBL" id="AAG60522.1"/>
    </source>
</evidence>
<evidence type="ECO:0000312" key="7">
    <source>
        <dbReference type="EMBL" id="AAG60525.1"/>
    </source>
</evidence>
<dbReference type="EMBL" id="AF215101">
    <property type="protein sequence ID" value="AAG60522.1"/>
    <property type="molecule type" value="mRNA"/>
</dbReference>
<dbReference type="EMBL" id="AF214992">
    <property type="protein sequence ID" value="AAG60420.1"/>
    <property type="molecule type" value="mRNA"/>
</dbReference>
<dbReference type="EMBL" id="AF215104">
    <property type="protein sequence ID" value="AAG60525.1"/>
    <property type="molecule type" value="mRNA"/>
</dbReference>
<dbReference type="SMR" id="Q9BH79"/>
<dbReference type="ConoServer" id="3195">
    <property type="toxin name" value="Ar5.3"/>
</dbReference>
<dbReference type="ConoServer" id="679">
    <property type="toxin name" value="Ar5.3 precursor"/>
</dbReference>
<dbReference type="GO" id="GO:0005576">
    <property type="term" value="C:extracellular region"/>
    <property type="evidence" value="ECO:0007669"/>
    <property type="project" value="UniProtKB-SubCell"/>
</dbReference>
<dbReference type="GO" id="GO:0090729">
    <property type="term" value="F:toxin activity"/>
    <property type="evidence" value="ECO:0007669"/>
    <property type="project" value="UniProtKB-KW"/>
</dbReference>
<dbReference type="InterPro" id="IPR031565">
    <property type="entry name" value="T-conotoxin"/>
</dbReference>
<dbReference type="Pfam" id="PF16981">
    <property type="entry name" value="Chi-conotoxin"/>
    <property type="match status" value="1"/>
</dbReference>
<comment type="subcellular location">
    <subcellularLocation>
        <location evidence="4">Secreted</location>
    </subcellularLocation>
</comment>
<comment type="tissue specificity">
    <text evidence="4">Expressed by the venom duct.</text>
</comment>
<comment type="domain">
    <text evidence="3">The cysteine framework is V (CC-CC).</text>
</comment>
<comment type="PTM">
    <text evidence="3">Contains 2 disulfide bonds that can be either 'C1-C3, C2-C4' or 'C1-C4, C2-C3', since these disulfide connectivities have been observed for conotoxins with cysteine framework V (for examples, see AC P0DQQ7 and AC P81755).</text>
</comment>
<comment type="similarity">
    <text evidence="3">Belongs to the conotoxin T superfamily.</text>
</comment>
<sequence>MLCLPVFIILLLLASPAASNPLEKRIQNDLIRAALEDADMENDPRSIIDSVKTFCCSTFNLGICCSKK</sequence>
<protein>
    <recommendedName>
        <fullName evidence="3">Conotoxin Ar5.3</fullName>
    </recommendedName>
    <alternativeName>
        <fullName evidence="7">Conotoxin ArMLCL-0111</fullName>
    </alternativeName>
    <alternativeName>
        <fullName evidence="5">Conotoxin ArMLCL-0212</fullName>
    </alternativeName>
    <alternativeName>
        <fullName evidence="6">Conotoxin ArMLCL-D01</fullName>
    </alternativeName>
</protein>